<keyword id="KW-0489">Methyltransferase</keyword>
<keyword id="KW-0506">mRNA capping</keyword>
<keyword id="KW-0507">mRNA processing</keyword>
<keyword id="KW-0539">Nucleus</keyword>
<keyword id="KW-1185">Reference proteome</keyword>
<keyword id="KW-0694">RNA-binding</keyword>
<keyword id="KW-0949">S-adenosyl-L-methionine</keyword>
<keyword id="KW-0808">Transferase</keyword>
<evidence type="ECO:0000250" key="1"/>
<evidence type="ECO:0000250" key="2">
    <source>
        <dbReference type="UniProtKB" id="O43148"/>
    </source>
</evidence>
<evidence type="ECO:0000255" key="3">
    <source>
        <dbReference type="PROSITE-ProRule" id="PRU00895"/>
    </source>
</evidence>
<evidence type="ECO:0000256" key="4">
    <source>
        <dbReference type="SAM" id="MobiDB-lite"/>
    </source>
</evidence>
<comment type="function">
    <text evidence="1">Responsible for methylating the 5'-cap structure of mRNAs.</text>
</comment>
<comment type="catalytic activity">
    <reaction evidence="2 3">
        <text>a 5'-end (5'-triphosphoguanosine)-ribonucleoside in mRNA + S-adenosyl-L-methionine = a 5'-end (N(7)-methyl 5'-triphosphoguanosine)-ribonucleoside in mRNA + S-adenosyl-L-homocysteine</text>
        <dbReference type="Rhea" id="RHEA:67008"/>
        <dbReference type="Rhea" id="RHEA-COMP:17166"/>
        <dbReference type="Rhea" id="RHEA-COMP:17167"/>
        <dbReference type="ChEBI" id="CHEBI:57856"/>
        <dbReference type="ChEBI" id="CHEBI:59789"/>
        <dbReference type="ChEBI" id="CHEBI:156461"/>
        <dbReference type="ChEBI" id="CHEBI:167617"/>
        <dbReference type="EC" id="2.1.1.56"/>
    </reaction>
</comment>
<comment type="subcellular location">
    <subcellularLocation>
        <location evidence="1">Nucleus</location>
    </subcellularLocation>
</comment>
<comment type="similarity">
    <text evidence="3">Belongs to the class I-like SAM-binding methyltransferase superfamily. mRNA cap 0 methyltransferase family.</text>
</comment>
<gene>
    <name type="primary">ABD1</name>
    <name type="ordered locus">CNC01440</name>
</gene>
<protein>
    <recommendedName>
        <fullName>mRNA cap guanine-N(7) methyltransferase</fullName>
        <ecNumber evidence="2">2.1.1.56</ecNumber>
    </recommendedName>
    <alternativeName>
        <fullName>mRNA (guanine-N(7))-methyltransferase</fullName>
    </alternativeName>
    <alternativeName>
        <fullName>mRNA cap methyltransferase</fullName>
    </alternativeName>
</protein>
<reference key="1">
    <citation type="journal article" date="2005" name="Science">
        <title>The genome of the basidiomycetous yeast and human pathogen Cryptococcus neoformans.</title>
        <authorList>
            <person name="Loftus B.J."/>
            <person name="Fung E."/>
            <person name="Roncaglia P."/>
            <person name="Rowley D."/>
            <person name="Amedeo P."/>
            <person name="Bruno D."/>
            <person name="Vamathevan J."/>
            <person name="Miranda M."/>
            <person name="Anderson I.J."/>
            <person name="Fraser J.A."/>
            <person name="Allen J.E."/>
            <person name="Bosdet I.E."/>
            <person name="Brent M.R."/>
            <person name="Chiu R."/>
            <person name="Doering T.L."/>
            <person name="Donlin M.J."/>
            <person name="D'Souza C.A."/>
            <person name="Fox D.S."/>
            <person name="Grinberg V."/>
            <person name="Fu J."/>
            <person name="Fukushima M."/>
            <person name="Haas B.J."/>
            <person name="Huang J.C."/>
            <person name="Janbon G."/>
            <person name="Jones S.J.M."/>
            <person name="Koo H.L."/>
            <person name="Krzywinski M.I."/>
            <person name="Kwon-Chung K.J."/>
            <person name="Lengeler K.B."/>
            <person name="Maiti R."/>
            <person name="Marra M.A."/>
            <person name="Marra R.E."/>
            <person name="Mathewson C.A."/>
            <person name="Mitchell T.G."/>
            <person name="Pertea M."/>
            <person name="Riggs F.R."/>
            <person name="Salzberg S.L."/>
            <person name="Schein J.E."/>
            <person name="Shvartsbeyn A."/>
            <person name="Shin H."/>
            <person name="Shumway M."/>
            <person name="Specht C.A."/>
            <person name="Suh B.B."/>
            <person name="Tenney A."/>
            <person name="Utterback T.R."/>
            <person name="Wickes B.L."/>
            <person name="Wortman J.R."/>
            <person name="Wye N.H."/>
            <person name="Kronstad J.W."/>
            <person name="Lodge J.K."/>
            <person name="Heitman J."/>
            <person name="Davis R.W."/>
            <person name="Fraser C.M."/>
            <person name="Hyman R.W."/>
        </authorList>
    </citation>
    <scope>NUCLEOTIDE SEQUENCE [LARGE SCALE GENOMIC DNA]</scope>
    <source>
        <strain>JEC21 / ATCC MYA-565</strain>
    </source>
</reference>
<dbReference type="EC" id="2.1.1.56" evidence="2"/>
<dbReference type="EMBL" id="AE017343">
    <property type="protein sequence ID" value="AAW42167.2"/>
    <property type="molecule type" value="Genomic_DNA"/>
</dbReference>
<dbReference type="RefSeq" id="XP_569474.1">
    <property type="nucleotide sequence ID" value="XM_569474.1"/>
</dbReference>
<dbReference type="SMR" id="P0CO64"/>
<dbReference type="STRING" id="214684.P0CO64"/>
<dbReference type="PaxDb" id="214684-P0CO64"/>
<dbReference type="eggNOG" id="KOG1975">
    <property type="taxonomic scope" value="Eukaryota"/>
</dbReference>
<dbReference type="HOGENOM" id="CLU_020346_4_0_1"/>
<dbReference type="InParanoid" id="P0CO64"/>
<dbReference type="Proteomes" id="UP000002149">
    <property type="component" value="Chromosome 3"/>
</dbReference>
<dbReference type="GO" id="GO:0005634">
    <property type="term" value="C:nucleus"/>
    <property type="evidence" value="ECO:0000318"/>
    <property type="project" value="GO_Central"/>
</dbReference>
<dbReference type="GO" id="GO:0004482">
    <property type="term" value="F:mRNA 5'-cap (guanine-N7-)-methyltransferase activity"/>
    <property type="evidence" value="ECO:0000318"/>
    <property type="project" value="GO_Central"/>
</dbReference>
<dbReference type="GO" id="GO:0003723">
    <property type="term" value="F:RNA binding"/>
    <property type="evidence" value="ECO:0007669"/>
    <property type="project" value="UniProtKB-KW"/>
</dbReference>
<dbReference type="GO" id="GO:0006370">
    <property type="term" value="P:7-methylguanosine mRNA capping"/>
    <property type="evidence" value="ECO:0000318"/>
    <property type="project" value="GO_Central"/>
</dbReference>
<dbReference type="CDD" id="cd02440">
    <property type="entry name" value="AdoMet_MTases"/>
    <property type="match status" value="1"/>
</dbReference>
<dbReference type="FunFam" id="3.40.50.150:FF:000412">
    <property type="entry name" value="mRNA cap guanine-N7 methyltransferase"/>
    <property type="match status" value="1"/>
</dbReference>
<dbReference type="Gene3D" id="3.40.50.150">
    <property type="entry name" value="Vaccinia Virus protein VP39"/>
    <property type="match status" value="1"/>
</dbReference>
<dbReference type="InterPro" id="IPR004971">
    <property type="entry name" value="mRNA_G-N7_MeTrfase_dom"/>
</dbReference>
<dbReference type="InterPro" id="IPR039753">
    <property type="entry name" value="RG7MT1"/>
</dbReference>
<dbReference type="InterPro" id="IPR029063">
    <property type="entry name" value="SAM-dependent_MTases_sf"/>
</dbReference>
<dbReference type="PANTHER" id="PTHR12189:SF2">
    <property type="entry name" value="MRNA CAP GUANINE-N7 METHYLTRANSFERASE"/>
    <property type="match status" value="1"/>
</dbReference>
<dbReference type="PANTHER" id="PTHR12189">
    <property type="entry name" value="MRNA GUANINE-7- METHYLTRANSFERASE"/>
    <property type="match status" value="1"/>
</dbReference>
<dbReference type="Pfam" id="PF03291">
    <property type="entry name" value="mRNA_G-N7_MeTrfase"/>
    <property type="match status" value="1"/>
</dbReference>
<dbReference type="SUPFAM" id="SSF53335">
    <property type="entry name" value="S-adenosyl-L-methionine-dependent methyltransferases"/>
    <property type="match status" value="1"/>
</dbReference>
<dbReference type="PROSITE" id="PS51562">
    <property type="entry name" value="RNA_CAP0_MT"/>
    <property type="match status" value="1"/>
</dbReference>
<proteinExistence type="inferred from homology"/>
<organism>
    <name type="scientific">Cryptococcus neoformans var. neoformans serotype D (strain JEC21 / ATCC MYA-565)</name>
    <name type="common">Filobasidiella neoformans</name>
    <dbReference type="NCBI Taxonomy" id="214684"/>
    <lineage>
        <taxon>Eukaryota</taxon>
        <taxon>Fungi</taxon>
        <taxon>Dikarya</taxon>
        <taxon>Basidiomycota</taxon>
        <taxon>Agaricomycotina</taxon>
        <taxon>Tremellomycetes</taxon>
        <taxon>Tremellales</taxon>
        <taxon>Cryptococcaceae</taxon>
        <taxon>Cryptococcus</taxon>
        <taxon>Cryptococcus neoformans species complex</taxon>
    </lineage>
</organism>
<accession>P0CO64</accession>
<accession>Q55VA2</accession>
<accession>Q5KKY2</accession>
<name>MCES_CRYNJ</name>
<feature type="chain" id="PRO_0000303907" description="mRNA cap guanine-N(7) methyltransferase">
    <location>
        <begin position="1"/>
        <end position="620"/>
    </location>
</feature>
<feature type="domain" description="mRNA cap 0 methyltransferase" evidence="3">
    <location>
        <begin position="345"/>
        <end position="620"/>
    </location>
</feature>
<feature type="region of interest" description="Disordered" evidence="4">
    <location>
        <begin position="1"/>
        <end position="176"/>
    </location>
</feature>
<feature type="region of interest" description="Disordered" evidence="4">
    <location>
        <begin position="193"/>
        <end position="304"/>
    </location>
</feature>
<feature type="compositionally biased region" description="Polar residues" evidence="4">
    <location>
        <begin position="29"/>
        <end position="44"/>
    </location>
</feature>
<feature type="compositionally biased region" description="Low complexity" evidence="4">
    <location>
        <begin position="45"/>
        <end position="60"/>
    </location>
</feature>
<feature type="compositionally biased region" description="Low complexity" evidence="4">
    <location>
        <begin position="136"/>
        <end position="157"/>
    </location>
</feature>
<feature type="binding site" evidence="3">
    <location>
        <begin position="354"/>
        <end position="355"/>
    </location>
    <ligand>
        <name>mRNA</name>
        <dbReference type="ChEBI" id="CHEBI:33699"/>
    </ligand>
    <ligandPart>
        <name>mRNA cap</name>
    </ligandPart>
</feature>
<feature type="binding site" evidence="3">
    <location>
        <position position="358"/>
    </location>
    <ligand>
        <name>S-adenosyl-L-methionine</name>
        <dbReference type="ChEBI" id="CHEBI:59789"/>
    </ligand>
</feature>
<feature type="binding site" evidence="3">
    <location>
        <position position="377"/>
    </location>
    <ligand>
        <name>S-adenosyl-L-methionine</name>
        <dbReference type="ChEBI" id="CHEBI:59789"/>
    </ligand>
</feature>
<feature type="binding site" evidence="3">
    <location>
        <position position="399"/>
    </location>
    <ligand>
        <name>S-adenosyl-L-methionine</name>
        <dbReference type="ChEBI" id="CHEBI:59789"/>
    </ligand>
</feature>
<feature type="binding site" evidence="2">
    <location>
        <position position="428"/>
    </location>
    <ligand>
        <name>S-adenosyl-L-methionine</name>
        <dbReference type="ChEBI" id="CHEBI:59789"/>
    </ligand>
</feature>
<feature type="binding site" evidence="2">
    <location>
        <position position="454"/>
    </location>
    <ligand>
        <name>S-adenosyl-L-methionine</name>
        <dbReference type="ChEBI" id="CHEBI:59789"/>
    </ligand>
</feature>
<feature type="binding site" evidence="2">
    <location>
        <position position="459"/>
    </location>
    <ligand>
        <name>S-adenosyl-L-methionine</name>
        <dbReference type="ChEBI" id="CHEBI:59789"/>
    </ligand>
</feature>
<feature type="site" description="mRNA cap binding" evidence="3">
    <location>
        <position position="380"/>
    </location>
</feature>
<feature type="site" description="mRNA cap binding" evidence="3">
    <location>
        <position position="386"/>
    </location>
</feature>
<feature type="site" description="mRNA cap binding" evidence="3">
    <location>
        <position position="411"/>
    </location>
</feature>
<feature type="site" description="mRNA cap binding" evidence="3">
    <location>
        <position position="458"/>
    </location>
</feature>
<feature type="site" description="mRNA cap binding" evidence="3">
    <location>
        <position position="545"/>
    </location>
</feature>
<feature type="site" description="mRNA cap binding" evidence="3">
    <location>
        <position position="612"/>
    </location>
</feature>
<sequence length="620" mass="69237">MLPPQQPIHAELEHGRRTSAGSHAAQLARSPSMSLSPRSQNQSLPYPSSRPGSAAGSAHPFGYDPRQGTLSPVLSARRTSEDQPRPTSSSSASGRRYTEPASQTPAPAPLGSSAYRPRHTSTPGNPSSAYAPRFTPQPTTTPSSPSTSQHTPYTPHHSAPPRILHYNPHRQSAPSSVLRPIYPDEVAHLRQLAHANNPLRQKPAARRYSYSGGRAPEPTPTPRTSLPGENDHSYFPPQWDDRPSMPPSEVSYGGPPSSTPGAPPSGYSQYPPNWEAQTPGGNWDGERPGRLGKRRARDEEDDEYERNKRVVSGPVAGQAYSKKVTVVAEHYNSRPEVGVERREFSPIIGLKKFNNWIKSVLIGKFAYRPRGKVLDVGCGKGGDLNKWKQARIALYVGLDVADQSVQQAADRYRRMPKPGFDAFFYAHDCFSNPLSDVLSPELQIKDLYDNVTMQFCMHYAFENAAKARMMIENVSRYLRRGGIFIGTIPNAELLLERLNELPDRDEELRFGNSCYSIQFTERRHKGVYGHDYRFYLTDAVEDVPEYLVDWENFVSLASESGLRLVYKKAFHEILQEEKDSRDFGPLLGKMGVLNEYGESAMDADQWEAANLYMGFAFEKM</sequence>